<organism>
    <name type="scientific">Mannheimia succiniciproducens (strain KCTC 0769BP / MBEL55E)</name>
    <dbReference type="NCBI Taxonomy" id="221988"/>
    <lineage>
        <taxon>Bacteria</taxon>
        <taxon>Pseudomonadati</taxon>
        <taxon>Pseudomonadota</taxon>
        <taxon>Gammaproteobacteria</taxon>
        <taxon>Pasteurellales</taxon>
        <taxon>Pasteurellaceae</taxon>
        <taxon>Basfia</taxon>
    </lineage>
</organism>
<sequence length="152" mass="17277">MFRGAQAINLDTKGRIAIPTRYRPELLAENQGQLICTVDIRQPCLLLYPLKEWEIIEQKLCQLANFDPAQRSVQRVMSGYATECELDSAGRILLSAPLRQRAKLEKTIMLVGQLNKFEIWSETEWQAQIERDLELGLSGELATSDALKMLSL</sequence>
<name>MRAZ_MANSM</name>
<reference key="1">
    <citation type="journal article" date="2004" name="Nat. Biotechnol.">
        <title>The genome sequence of the capnophilic rumen bacterium Mannheimia succiniciproducens.</title>
        <authorList>
            <person name="Hong S.H."/>
            <person name="Kim J.S."/>
            <person name="Lee S.Y."/>
            <person name="In Y.H."/>
            <person name="Choi S.S."/>
            <person name="Rih J.-K."/>
            <person name="Kim C.H."/>
            <person name="Jeong H."/>
            <person name="Hur C.G."/>
            <person name="Kim J.J."/>
        </authorList>
    </citation>
    <scope>NUCLEOTIDE SEQUENCE [LARGE SCALE GENOMIC DNA]</scope>
    <source>
        <strain>KCTC 0769BP / MBEL55E</strain>
    </source>
</reference>
<comment type="subunit">
    <text evidence="1">Forms oligomers.</text>
</comment>
<comment type="subcellular location">
    <subcellularLocation>
        <location evidence="1">Cytoplasm</location>
        <location evidence="1">Nucleoid</location>
    </subcellularLocation>
</comment>
<comment type="similarity">
    <text evidence="1">Belongs to the MraZ family.</text>
</comment>
<protein>
    <recommendedName>
        <fullName>Transcriptional regulator MraZ</fullName>
    </recommendedName>
</protein>
<accession>Q65RX7</accession>
<evidence type="ECO:0000255" key="1">
    <source>
        <dbReference type="HAMAP-Rule" id="MF_01008"/>
    </source>
</evidence>
<evidence type="ECO:0000255" key="2">
    <source>
        <dbReference type="PROSITE-ProRule" id="PRU01076"/>
    </source>
</evidence>
<keyword id="KW-0963">Cytoplasm</keyword>
<keyword id="KW-0238">DNA-binding</keyword>
<keyword id="KW-0677">Repeat</keyword>
<keyword id="KW-0804">Transcription</keyword>
<keyword id="KW-0805">Transcription regulation</keyword>
<proteinExistence type="inferred from homology"/>
<feature type="chain" id="PRO_0000108498" description="Transcriptional regulator MraZ">
    <location>
        <begin position="1"/>
        <end position="152"/>
    </location>
</feature>
<feature type="domain" description="SpoVT-AbrB 1" evidence="2">
    <location>
        <begin position="5"/>
        <end position="52"/>
    </location>
</feature>
<feature type="domain" description="SpoVT-AbrB 2" evidence="2">
    <location>
        <begin position="81"/>
        <end position="124"/>
    </location>
</feature>
<gene>
    <name evidence="1" type="primary">mraZ</name>
    <name type="ordered locus">MS1676</name>
</gene>
<dbReference type="EMBL" id="AE016827">
    <property type="protein sequence ID" value="AAU38283.1"/>
    <property type="molecule type" value="Genomic_DNA"/>
</dbReference>
<dbReference type="RefSeq" id="WP_011200844.1">
    <property type="nucleotide sequence ID" value="NC_006300.1"/>
</dbReference>
<dbReference type="SMR" id="Q65RX7"/>
<dbReference type="STRING" id="221988.MS1676"/>
<dbReference type="KEGG" id="msu:MS1676"/>
<dbReference type="eggNOG" id="COG2001">
    <property type="taxonomic scope" value="Bacteria"/>
</dbReference>
<dbReference type="HOGENOM" id="CLU_107907_2_0_6"/>
<dbReference type="OrthoDB" id="9807753at2"/>
<dbReference type="Proteomes" id="UP000000607">
    <property type="component" value="Chromosome"/>
</dbReference>
<dbReference type="GO" id="GO:0005737">
    <property type="term" value="C:cytoplasm"/>
    <property type="evidence" value="ECO:0007669"/>
    <property type="project" value="UniProtKB-UniRule"/>
</dbReference>
<dbReference type="GO" id="GO:0009295">
    <property type="term" value="C:nucleoid"/>
    <property type="evidence" value="ECO:0007669"/>
    <property type="project" value="UniProtKB-SubCell"/>
</dbReference>
<dbReference type="GO" id="GO:0003700">
    <property type="term" value="F:DNA-binding transcription factor activity"/>
    <property type="evidence" value="ECO:0007669"/>
    <property type="project" value="UniProtKB-UniRule"/>
</dbReference>
<dbReference type="GO" id="GO:0000976">
    <property type="term" value="F:transcription cis-regulatory region binding"/>
    <property type="evidence" value="ECO:0007669"/>
    <property type="project" value="TreeGrafter"/>
</dbReference>
<dbReference type="GO" id="GO:2000143">
    <property type="term" value="P:negative regulation of DNA-templated transcription initiation"/>
    <property type="evidence" value="ECO:0007669"/>
    <property type="project" value="TreeGrafter"/>
</dbReference>
<dbReference type="CDD" id="cd16321">
    <property type="entry name" value="MraZ_C"/>
    <property type="match status" value="1"/>
</dbReference>
<dbReference type="CDD" id="cd16320">
    <property type="entry name" value="MraZ_N"/>
    <property type="match status" value="1"/>
</dbReference>
<dbReference type="FunFam" id="3.40.1550.20:FF:000001">
    <property type="entry name" value="Transcriptional regulator MraZ"/>
    <property type="match status" value="1"/>
</dbReference>
<dbReference type="Gene3D" id="3.40.1550.20">
    <property type="entry name" value="Transcriptional regulator MraZ domain"/>
    <property type="match status" value="1"/>
</dbReference>
<dbReference type="HAMAP" id="MF_01008">
    <property type="entry name" value="MraZ"/>
    <property type="match status" value="1"/>
</dbReference>
<dbReference type="InterPro" id="IPR003444">
    <property type="entry name" value="MraZ"/>
</dbReference>
<dbReference type="InterPro" id="IPR035644">
    <property type="entry name" value="MraZ_C"/>
</dbReference>
<dbReference type="InterPro" id="IPR020603">
    <property type="entry name" value="MraZ_dom"/>
</dbReference>
<dbReference type="InterPro" id="IPR035642">
    <property type="entry name" value="MraZ_N"/>
</dbReference>
<dbReference type="InterPro" id="IPR038619">
    <property type="entry name" value="MraZ_sf"/>
</dbReference>
<dbReference type="InterPro" id="IPR007159">
    <property type="entry name" value="SpoVT-AbrB_dom"/>
</dbReference>
<dbReference type="InterPro" id="IPR037914">
    <property type="entry name" value="SpoVT-AbrB_sf"/>
</dbReference>
<dbReference type="NCBIfam" id="TIGR00242">
    <property type="entry name" value="division/cell wall cluster transcriptional repressor MraZ"/>
    <property type="match status" value="1"/>
</dbReference>
<dbReference type="PANTHER" id="PTHR34701">
    <property type="entry name" value="TRANSCRIPTIONAL REGULATOR MRAZ"/>
    <property type="match status" value="1"/>
</dbReference>
<dbReference type="PANTHER" id="PTHR34701:SF1">
    <property type="entry name" value="TRANSCRIPTIONAL REGULATOR MRAZ"/>
    <property type="match status" value="1"/>
</dbReference>
<dbReference type="Pfam" id="PF02381">
    <property type="entry name" value="MraZ"/>
    <property type="match status" value="2"/>
</dbReference>
<dbReference type="SUPFAM" id="SSF89447">
    <property type="entry name" value="AbrB/MazE/MraZ-like"/>
    <property type="match status" value="1"/>
</dbReference>
<dbReference type="PROSITE" id="PS51740">
    <property type="entry name" value="SPOVT_ABRB"/>
    <property type="match status" value="2"/>
</dbReference>